<organism>
    <name type="scientific">Escherichia coli O127:H6 (strain E2348/69 / EPEC)</name>
    <dbReference type="NCBI Taxonomy" id="574521"/>
    <lineage>
        <taxon>Bacteria</taxon>
        <taxon>Pseudomonadati</taxon>
        <taxon>Pseudomonadota</taxon>
        <taxon>Gammaproteobacteria</taxon>
        <taxon>Enterobacterales</taxon>
        <taxon>Enterobacteriaceae</taxon>
        <taxon>Escherichia</taxon>
    </lineage>
</organism>
<sequence>MATTHLDVCAVVPAAGFGRRMQTECPKQYLSIGNQTILEHSVHALLAHPRVKRVVIAISPGDSRFAQLPLANHPQITVVDGGEERADSVLAGLKAAGDAQWVLVHDAARPCLHQDDLARLLALSETSRTGGILAAPVRDTMKRAETGKNAIAHTVDRNGLWHALTPQFFPRELLHDCLTRALNEGATITDEASALEYCGFHPQLVEGRADNIKVTRPEDLALAEFYLTRTIHQENT</sequence>
<reference key="1">
    <citation type="journal article" date="2009" name="J. Bacteriol.">
        <title>Complete genome sequence and comparative genome analysis of enteropathogenic Escherichia coli O127:H6 strain E2348/69.</title>
        <authorList>
            <person name="Iguchi A."/>
            <person name="Thomson N.R."/>
            <person name="Ogura Y."/>
            <person name="Saunders D."/>
            <person name="Ooka T."/>
            <person name="Henderson I.R."/>
            <person name="Harris D."/>
            <person name="Asadulghani M."/>
            <person name="Kurokawa K."/>
            <person name="Dean P."/>
            <person name="Kenny B."/>
            <person name="Quail M.A."/>
            <person name="Thurston S."/>
            <person name="Dougan G."/>
            <person name="Hayashi T."/>
            <person name="Parkhill J."/>
            <person name="Frankel G."/>
        </authorList>
    </citation>
    <scope>NUCLEOTIDE SEQUENCE [LARGE SCALE GENOMIC DNA]</scope>
    <source>
        <strain>E2348/69 / EPEC</strain>
    </source>
</reference>
<comment type="function">
    <text evidence="1">Catalyzes the formation of 4-diphosphocytidyl-2-C-methyl-D-erythritol from CTP and 2-C-methyl-D-erythritol 4-phosphate (MEP).</text>
</comment>
<comment type="catalytic activity">
    <reaction evidence="1">
        <text>2-C-methyl-D-erythritol 4-phosphate + CTP + H(+) = 4-CDP-2-C-methyl-D-erythritol + diphosphate</text>
        <dbReference type="Rhea" id="RHEA:13429"/>
        <dbReference type="ChEBI" id="CHEBI:15378"/>
        <dbReference type="ChEBI" id="CHEBI:33019"/>
        <dbReference type="ChEBI" id="CHEBI:37563"/>
        <dbReference type="ChEBI" id="CHEBI:57823"/>
        <dbReference type="ChEBI" id="CHEBI:58262"/>
        <dbReference type="EC" id="2.7.7.60"/>
    </reaction>
</comment>
<comment type="pathway">
    <text evidence="1">Isoprenoid biosynthesis; isopentenyl diphosphate biosynthesis via DXP pathway; isopentenyl diphosphate from 1-deoxy-D-xylulose 5-phosphate: step 2/6.</text>
</comment>
<comment type="subunit">
    <text evidence="1">Homodimer.</text>
</comment>
<comment type="similarity">
    <text evidence="1">Belongs to the IspD/TarI cytidylyltransferase family. IspD subfamily.</text>
</comment>
<name>ISPD_ECO27</name>
<keyword id="KW-0414">Isoprene biosynthesis</keyword>
<keyword id="KW-0548">Nucleotidyltransferase</keyword>
<keyword id="KW-1185">Reference proteome</keyword>
<keyword id="KW-0808">Transferase</keyword>
<accession>B7UHG6</accession>
<proteinExistence type="inferred from homology"/>
<feature type="chain" id="PRO_1000191057" description="2-C-methyl-D-erythritol 4-phosphate cytidylyltransferase">
    <location>
        <begin position="1"/>
        <end position="236"/>
    </location>
</feature>
<feature type="site" description="Transition state stabilizer" evidence="1">
    <location>
        <position position="20"/>
    </location>
</feature>
<feature type="site" description="Transition state stabilizer" evidence="1">
    <location>
        <position position="27"/>
    </location>
</feature>
<feature type="site" description="Positions MEP for the nucleophilic attack" evidence="1">
    <location>
        <position position="157"/>
    </location>
</feature>
<feature type="site" description="Positions MEP for the nucleophilic attack" evidence="1">
    <location>
        <position position="213"/>
    </location>
</feature>
<dbReference type="EC" id="2.7.7.60" evidence="1"/>
<dbReference type="EMBL" id="FM180568">
    <property type="protein sequence ID" value="CAS10565.1"/>
    <property type="molecule type" value="Genomic_DNA"/>
</dbReference>
<dbReference type="RefSeq" id="WP_000246147.1">
    <property type="nucleotide sequence ID" value="NC_011601.1"/>
</dbReference>
<dbReference type="SMR" id="B7UHG6"/>
<dbReference type="KEGG" id="ecg:E2348C_3017"/>
<dbReference type="HOGENOM" id="CLU_061281_3_1_6"/>
<dbReference type="UniPathway" id="UPA00056">
    <property type="reaction ID" value="UER00093"/>
</dbReference>
<dbReference type="Proteomes" id="UP000008205">
    <property type="component" value="Chromosome"/>
</dbReference>
<dbReference type="GO" id="GO:0050518">
    <property type="term" value="F:2-C-methyl-D-erythritol 4-phosphate cytidylyltransferase activity"/>
    <property type="evidence" value="ECO:0007669"/>
    <property type="project" value="UniProtKB-UniRule"/>
</dbReference>
<dbReference type="GO" id="GO:0019288">
    <property type="term" value="P:isopentenyl diphosphate biosynthetic process, methylerythritol 4-phosphate pathway"/>
    <property type="evidence" value="ECO:0007669"/>
    <property type="project" value="UniProtKB-UniRule"/>
</dbReference>
<dbReference type="CDD" id="cd02516">
    <property type="entry name" value="CDP-ME_synthetase"/>
    <property type="match status" value="1"/>
</dbReference>
<dbReference type="FunFam" id="3.90.550.10:FF:000003">
    <property type="entry name" value="2-C-methyl-D-erythritol 4-phosphate cytidylyltransferase"/>
    <property type="match status" value="1"/>
</dbReference>
<dbReference type="Gene3D" id="3.90.550.10">
    <property type="entry name" value="Spore Coat Polysaccharide Biosynthesis Protein SpsA, Chain A"/>
    <property type="match status" value="1"/>
</dbReference>
<dbReference type="HAMAP" id="MF_00108">
    <property type="entry name" value="IspD"/>
    <property type="match status" value="1"/>
</dbReference>
<dbReference type="InterPro" id="IPR001228">
    <property type="entry name" value="IspD"/>
</dbReference>
<dbReference type="InterPro" id="IPR034683">
    <property type="entry name" value="IspD/TarI"/>
</dbReference>
<dbReference type="InterPro" id="IPR050088">
    <property type="entry name" value="IspD/TarI_cytidylyltransf_bact"/>
</dbReference>
<dbReference type="InterPro" id="IPR018294">
    <property type="entry name" value="ISPD_synthase_CS"/>
</dbReference>
<dbReference type="InterPro" id="IPR029044">
    <property type="entry name" value="Nucleotide-diphossugar_trans"/>
</dbReference>
<dbReference type="NCBIfam" id="TIGR00453">
    <property type="entry name" value="ispD"/>
    <property type="match status" value="1"/>
</dbReference>
<dbReference type="PANTHER" id="PTHR32125">
    <property type="entry name" value="2-C-METHYL-D-ERYTHRITOL 4-PHOSPHATE CYTIDYLYLTRANSFERASE, CHLOROPLASTIC"/>
    <property type="match status" value="1"/>
</dbReference>
<dbReference type="PANTHER" id="PTHR32125:SF4">
    <property type="entry name" value="2-C-METHYL-D-ERYTHRITOL 4-PHOSPHATE CYTIDYLYLTRANSFERASE, CHLOROPLASTIC"/>
    <property type="match status" value="1"/>
</dbReference>
<dbReference type="Pfam" id="PF01128">
    <property type="entry name" value="IspD"/>
    <property type="match status" value="1"/>
</dbReference>
<dbReference type="SUPFAM" id="SSF53448">
    <property type="entry name" value="Nucleotide-diphospho-sugar transferases"/>
    <property type="match status" value="1"/>
</dbReference>
<dbReference type="PROSITE" id="PS01295">
    <property type="entry name" value="ISPD"/>
    <property type="match status" value="1"/>
</dbReference>
<protein>
    <recommendedName>
        <fullName evidence="1">2-C-methyl-D-erythritol 4-phosphate cytidylyltransferase</fullName>
        <ecNumber evidence="1">2.7.7.60</ecNumber>
    </recommendedName>
    <alternativeName>
        <fullName evidence="1">4-diphosphocytidyl-2C-methyl-D-erythritol synthase</fullName>
    </alternativeName>
    <alternativeName>
        <fullName evidence="1">MEP cytidylyltransferase</fullName>
        <shortName evidence="1">MCT</shortName>
    </alternativeName>
</protein>
<gene>
    <name evidence="1" type="primary">ispD</name>
    <name type="ordered locus">E2348C_3017</name>
</gene>
<evidence type="ECO:0000255" key="1">
    <source>
        <dbReference type="HAMAP-Rule" id="MF_00108"/>
    </source>
</evidence>